<comment type="function">
    <text evidence="1">Catalyzes the transfer of a dimethylallyl group onto the adenine at position 37 in tRNAs that read codons beginning with uridine, leading to the formation of N6-(dimethylallyl)adenosine (i(6)A).</text>
</comment>
<comment type="catalytic activity">
    <reaction evidence="1">
        <text>adenosine(37) in tRNA + dimethylallyl diphosphate = N(6)-dimethylallyladenosine(37) in tRNA + diphosphate</text>
        <dbReference type="Rhea" id="RHEA:26482"/>
        <dbReference type="Rhea" id="RHEA-COMP:10162"/>
        <dbReference type="Rhea" id="RHEA-COMP:10375"/>
        <dbReference type="ChEBI" id="CHEBI:33019"/>
        <dbReference type="ChEBI" id="CHEBI:57623"/>
        <dbReference type="ChEBI" id="CHEBI:74411"/>
        <dbReference type="ChEBI" id="CHEBI:74415"/>
        <dbReference type="EC" id="2.5.1.75"/>
    </reaction>
</comment>
<comment type="cofactor">
    <cofactor evidence="1">
        <name>Mg(2+)</name>
        <dbReference type="ChEBI" id="CHEBI:18420"/>
    </cofactor>
</comment>
<comment type="subunit">
    <text evidence="1">Monomer.</text>
</comment>
<comment type="similarity">
    <text evidence="1">Belongs to the IPP transferase family.</text>
</comment>
<proteinExistence type="inferred from homology"/>
<protein>
    <recommendedName>
        <fullName evidence="1">tRNA dimethylallyltransferase 2</fullName>
        <ecNumber evidence="1">2.5.1.75</ecNumber>
    </recommendedName>
    <alternativeName>
        <fullName evidence="1">Dimethylallyl diphosphate:tRNA dimethylallyltransferase 2</fullName>
        <shortName evidence="1">DMAPP:tRNA dimethylallyltransferase 2</shortName>
        <shortName evidence="1">DMATase 2</shortName>
    </alternativeName>
    <alternativeName>
        <fullName evidence="1">Isopentenyl-diphosphate:tRNA isopentenyltransferase 2</fullName>
        <shortName evidence="1">IPP transferase 2</shortName>
        <shortName evidence="1">IPPT 2</shortName>
        <shortName evidence="1">IPTase 2</shortName>
    </alternativeName>
</protein>
<keyword id="KW-0067">ATP-binding</keyword>
<keyword id="KW-0460">Magnesium</keyword>
<keyword id="KW-0547">Nucleotide-binding</keyword>
<keyword id="KW-1185">Reference proteome</keyword>
<keyword id="KW-0808">Transferase</keyword>
<keyword id="KW-0819">tRNA processing</keyword>
<sequence length="306" mass="35375">MPDYDLITILGPTASGKTPFAAALAHELNTEIISADSRQIYRGMDLGTGKDLADYTVDGHPIPYHLIDIADPGYKYNVFEYQRDFLISYESIKQKGCLPVLCGGTGMYLESVLKGYKLMPVPENPELRARLANHSLEELTEILKQYKTLHNSTDVDTVKRAIRAIEIEEYYAVHPVPEREFPKLNSLIIGVDIDRELRREKITRRLKQRLDEGMVDEVRRLTEQGISPDDLIYYGLEYKFLTLYVIGKLTYEEMFTELETAIHQFAKRQMTWFRGMERRGFTIHWVSAELPMEEKIAFVIEKLRGN</sequence>
<evidence type="ECO:0000255" key="1">
    <source>
        <dbReference type="HAMAP-Rule" id="MF_00185"/>
    </source>
</evidence>
<accession>Q89ZQ3</accession>
<gene>
    <name evidence="1" type="primary">miaA2</name>
    <name type="ordered locus">BT_4323</name>
</gene>
<name>MIAA2_BACTN</name>
<reference key="1">
    <citation type="journal article" date="2003" name="Science">
        <title>A genomic view of the human-Bacteroides thetaiotaomicron symbiosis.</title>
        <authorList>
            <person name="Xu J."/>
            <person name="Bjursell M.K."/>
            <person name="Himrod J."/>
            <person name="Deng S."/>
            <person name="Carmichael L.K."/>
            <person name="Chiang H.C."/>
            <person name="Hooper L.V."/>
            <person name="Gordon J.I."/>
        </authorList>
    </citation>
    <scope>NUCLEOTIDE SEQUENCE [LARGE SCALE GENOMIC DNA]</scope>
    <source>
        <strain>ATCC 29148 / DSM 2079 / JCM 5827 / CCUG 10774 / NCTC 10582 / VPI-5482 / E50</strain>
    </source>
</reference>
<feature type="chain" id="PRO_0000377080" description="tRNA dimethylallyltransferase 2">
    <location>
        <begin position="1"/>
        <end position="306"/>
    </location>
</feature>
<feature type="region of interest" description="Interaction with substrate tRNA" evidence="1">
    <location>
        <begin position="36"/>
        <end position="39"/>
    </location>
</feature>
<feature type="binding site" evidence="1">
    <location>
        <begin position="11"/>
        <end position="18"/>
    </location>
    <ligand>
        <name>ATP</name>
        <dbReference type="ChEBI" id="CHEBI:30616"/>
    </ligand>
</feature>
<feature type="binding site" evidence="1">
    <location>
        <begin position="13"/>
        <end position="18"/>
    </location>
    <ligand>
        <name>substrate</name>
    </ligand>
</feature>
<feature type="site" description="Interaction with substrate tRNA" evidence="1">
    <location>
        <position position="105"/>
    </location>
</feature>
<dbReference type="EC" id="2.5.1.75" evidence="1"/>
<dbReference type="EMBL" id="AE015928">
    <property type="protein sequence ID" value="AAO79428.1"/>
    <property type="molecule type" value="Genomic_DNA"/>
</dbReference>
<dbReference type="RefSeq" id="NP_813234.1">
    <property type="nucleotide sequence ID" value="NC_004663.1"/>
</dbReference>
<dbReference type="SMR" id="Q89ZQ3"/>
<dbReference type="STRING" id="226186.BT_4323"/>
<dbReference type="PaxDb" id="226186-BT_4323"/>
<dbReference type="DNASU" id="1073719"/>
<dbReference type="EnsemblBacteria" id="AAO79428">
    <property type="protein sequence ID" value="AAO79428"/>
    <property type="gene ID" value="BT_4323"/>
</dbReference>
<dbReference type="KEGG" id="bth:BT_4323"/>
<dbReference type="PATRIC" id="fig|226186.12.peg.4399"/>
<dbReference type="eggNOG" id="COG0324">
    <property type="taxonomic scope" value="Bacteria"/>
</dbReference>
<dbReference type="HOGENOM" id="CLU_032616_0_1_10"/>
<dbReference type="InParanoid" id="Q89ZQ3"/>
<dbReference type="OrthoDB" id="9776390at2"/>
<dbReference type="Proteomes" id="UP000001414">
    <property type="component" value="Chromosome"/>
</dbReference>
<dbReference type="GO" id="GO:0005524">
    <property type="term" value="F:ATP binding"/>
    <property type="evidence" value="ECO:0007669"/>
    <property type="project" value="UniProtKB-UniRule"/>
</dbReference>
<dbReference type="GO" id="GO:0052381">
    <property type="term" value="F:tRNA dimethylallyltransferase activity"/>
    <property type="evidence" value="ECO:0000318"/>
    <property type="project" value="GO_Central"/>
</dbReference>
<dbReference type="GO" id="GO:0006400">
    <property type="term" value="P:tRNA modification"/>
    <property type="evidence" value="ECO:0000318"/>
    <property type="project" value="GO_Central"/>
</dbReference>
<dbReference type="FunFam" id="3.40.50.300:FF:002105">
    <property type="entry name" value="tRNA dimethylallyltransferase"/>
    <property type="match status" value="1"/>
</dbReference>
<dbReference type="FunFam" id="3.40.50.300:FF:003385">
    <property type="entry name" value="tRNA dimethylallyltransferase"/>
    <property type="match status" value="1"/>
</dbReference>
<dbReference type="Gene3D" id="3.40.50.300">
    <property type="entry name" value="P-loop containing nucleotide triphosphate hydrolases"/>
    <property type="match status" value="2"/>
</dbReference>
<dbReference type="HAMAP" id="MF_00185">
    <property type="entry name" value="IPP_trans"/>
    <property type="match status" value="1"/>
</dbReference>
<dbReference type="InterPro" id="IPR039657">
    <property type="entry name" value="Dimethylallyltransferase"/>
</dbReference>
<dbReference type="InterPro" id="IPR018022">
    <property type="entry name" value="IPT"/>
</dbReference>
<dbReference type="InterPro" id="IPR027417">
    <property type="entry name" value="P-loop_NTPase"/>
</dbReference>
<dbReference type="NCBIfam" id="TIGR00174">
    <property type="entry name" value="miaA"/>
    <property type="match status" value="1"/>
</dbReference>
<dbReference type="PANTHER" id="PTHR11088">
    <property type="entry name" value="TRNA DIMETHYLALLYLTRANSFERASE"/>
    <property type="match status" value="1"/>
</dbReference>
<dbReference type="PANTHER" id="PTHR11088:SF60">
    <property type="entry name" value="TRNA DIMETHYLALLYLTRANSFERASE"/>
    <property type="match status" value="1"/>
</dbReference>
<dbReference type="Pfam" id="PF01715">
    <property type="entry name" value="IPPT"/>
    <property type="match status" value="1"/>
</dbReference>
<dbReference type="SUPFAM" id="SSF52540">
    <property type="entry name" value="P-loop containing nucleoside triphosphate hydrolases"/>
    <property type="match status" value="2"/>
</dbReference>
<organism>
    <name type="scientific">Bacteroides thetaiotaomicron (strain ATCC 29148 / DSM 2079 / JCM 5827 / CCUG 10774 / NCTC 10582 / VPI-5482 / E50)</name>
    <dbReference type="NCBI Taxonomy" id="226186"/>
    <lineage>
        <taxon>Bacteria</taxon>
        <taxon>Pseudomonadati</taxon>
        <taxon>Bacteroidota</taxon>
        <taxon>Bacteroidia</taxon>
        <taxon>Bacteroidales</taxon>
        <taxon>Bacteroidaceae</taxon>
        <taxon>Bacteroides</taxon>
    </lineage>
</organism>